<accession>Q7VXH4</accession>
<name>UVRB_BORPE</name>
<sequence length="678" mass="76372">MTAPGFVEFPDSPFHLYQPYPPAGDQPGAIDALTEGVSDGLMFQTLLGVTGSGKTYTMANMIARLGRPALVLAPNKTLAAQLYAEMREFFPRNAVEYFVSYYDYYQPEAYVPTRDLFIEKDSSINEHIEQMRLSATKSLLERRDTVIVGTVSCIYGIGNPGDYHAMVLILRTGDRISRREVLARLVAMQYTRNDADFTRGVFRVRCETIDIFPAESPELALRLTLFDDEIESLELFDPLTGRVRQKLPRFTVYPGSHYVTPRETVLRAIETIKEELRERLAQLIADGKLVEAQRLEQRTRFDLEMLQELGFCKGIENYSRHLSGAAPGEPPPTLIDYLPADALMFIDESHVTIGQLGGMYRGDRSRKETLVQYGFRLPSALDNRPLRLEEFEARMRQCVFVSATPAAYEQEHADNVVEQVVRPTGLVDPIVEVRPAHTQVDDLLGEIHKRAALQERVLVTTLTKRMAEDLTDFLSEHGVRVRYLHSDIDTVERVEIIRDLRLGVFDVLVGINLLREGLDIPEVSLVAILDADKEGFLRSERSLIQTIGRAARNLNGRAILYADRITDSMRRAIDETERRRAKQIQHNTDHGITARGVSKAVRELIDGVVAPAGHDALESAVPAEVLTDEKAMAREIRRLEKLMMDHARNLEFEQAAAARDALNALKSRLLLDGVGWSG</sequence>
<evidence type="ECO:0000255" key="1">
    <source>
        <dbReference type="HAMAP-Rule" id="MF_00204"/>
    </source>
</evidence>
<gene>
    <name evidence="1" type="primary">uvrB</name>
    <name type="ordered locus">BP1796</name>
</gene>
<feature type="chain" id="PRO_0000227292" description="UvrABC system protein B">
    <location>
        <begin position="1"/>
        <end position="678"/>
    </location>
</feature>
<feature type="domain" description="Helicase ATP-binding" evidence="1">
    <location>
        <begin position="35"/>
        <end position="422"/>
    </location>
</feature>
<feature type="domain" description="Helicase C-terminal" evidence="1">
    <location>
        <begin position="439"/>
        <end position="605"/>
    </location>
</feature>
<feature type="domain" description="UVR" evidence="1">
    <location>
        <begin position="633"/>
        <end position="668"/>
    </location>
</feature>
<feature type="short sequence motif" description="Beta-hairpin">
    <location>
        <begin position="101"/>
        <end position="124"/>
    </location>
</feature>
<feature type="binding site" evidence="1">
    <location>
        <begin position="48"/>
        <end position="55"/>
    </location>
    <ligand>
        <name>ATP</name>
        <dbReference type="ChEBI" id="CHEBI:30616"/>
    </ligand>
</feature>
<organism>
    <name type="scientific">Bordetella pertussis (strain Tohama I / ATCC BAA-589 / NCTC 13251)</name>
    <dbReference type="NCBI Taxonomy" id="257313"/>
    <lineage>
        <taxon>Bacteria</taxon>
        <taxon>Pseudomonadati</taxon>
        <taxon>Pseudomonadota</taxon>
        <taxon>Betaproteobacteria</taxon>
        <taxon>Burkholderiales</taxon>
        <taxon>Alcaligenaceae</taxon>
        <taxon>Bordetella</taxon>
    </lineage>
</organism>
<comment type="function">
    <text evidence="1">The UvrABC repair system catalyzes the recognition and processing of DNA lesions. A damage recognition complex composed of 2 UvrA and 2 UvrB subunits scans DNA for abnormalities. Upon binding of the UvrA(2)B(2) complex to a putative damaged site, the DNA wraps around one UvrB monomer. DNA wrap is dependent on ATP binding by UvrB and probably causes local melting of the DNA helix, facilitating insertion of UvrB beta-hairpin between the DNA strands. Then UvrB probes one DNA strand for the presence of a lesion. If a lesion is found the UvrA subunits dissociate and the UvrB-DNA preincision complex is formed. This complex is subsequently bound by UvrC and the second UvrB is released. If no lesion is found, the DNA wraps around the other UvrB subunit that will check the other stand for damage.</text>
</comment>
<comment type="subunit">
    <text evidence="1">Forms a heterotetramer with UvrA during the search for lesions. Interacts with UvrC in an incision complex.</text>
</comment>
<comment type="subcellular location">
    <subcellularLocation>
        <location evidence="1">Cytoplasm</location>
    </subcellularLocation>
</comment>
<comment type="domain">
    <text evidence="1">The beta-hairpin motif is involved in DNA binding.</text>
</comment>
<comment type="similarity">
    <text evidence="1">Belongs to the UvrB family.</text>
</comment>
<proteinExistence type="inferred from homology"/>
<keyword id="KW-0067">ATP-binding</keyword>
<keyword id="KW-0963">Cytoplasm</keyword>
<keyword id="KW-0227">DNA damage</keyword>
<keyword id="KW-0228">DNA excision</keyword>
<keyword id="KW-0234">DNA repair</keyword>
<keyword id="KW-0267">Excision nuclease</keyword>
<keyword id="KW-0547">Nucleotide-binding</keyword>
<keyword id="KW-1185">Reference proteome</keyword>
<keyword id="KW-0742">SOS response</keyword>
<protein>
    <recommendedName>
        <fullName evidence="1">UvrABC system protein B</fullName>
        <shortName evidence="1">Protein UvrB</shortName>
    </recommendedName>
    <alternativeName>
        <fullName evidence="1">Excinuclease ABC subunit B</fullName>
    </alternativeName>
</protein>
<dbReference type="EMBL" id="BX640416">
    <property type="protein sequence ID" value="CAE42082.1"/>
    <property type="molecule type" value="Genomic_DNA"/>
</dbReference>
<dbReference type="RefSeq" id="NP_880502.1">
    <property type="nucleotide sequence ID" value="NC_002929.2"/>
</dbReference>
<dbReference type="RefSeq" id="WP_010930568.1">
    <property type="nucleotide sequence ID" value="NZ_CP039022.1"/>
</dbReference>
<dbReference type="SMR" id="Q7VXH4"/>
<dbReference type="STRING" id="257313.BP1796"/>
<dbReference type="PaxDb" id="257313-BP1796"/>
<dbReference type="GeneID" id="69602027"/>
<dbReference type="KEGG" id="bpe:BP1796"/>
<dbReference type="PATRIC" id="fig|257313.5.peg.1929"/>
<dbReference type="eggNOG" id="COG0556">
    <property type="taxonomic scope" value="Bacteria"/>
</dbReference>
<dbReference type="HOGENOM" id="CLU_009621_2_1_4"/>
<dbReference type="Proteomes" id="UP000002676">
    <property type="component" value="Chromosome"/>
</dbReference>
<dbReference type="GO" id="GO:0005737">
    <property type="term" value="C:cytoplasm"/>
    <property type="evidence" value="ECO:0007669"/>
    <property type="project" value="UniProtKB-SubCell"/>
</dbReference>
<dbReference type="GO" id="GO:0009380">
    <property type="term" value="C:excinuclease repair complex"/>
    <property type="evidence" value="ECO:0007669"/>
    <property type="project" value="InterPro"/>
</dbReference>
<dbReference type="GO" id="GO:0005524">
    <property type="term" value="F:ATP binding"/>
    <property type="evidence" value="ECO:0007669"/>
    <property type="project" value="UniProtKB-UniRule"/>
</dbReference>
<dbReference type="GO" id="GO:0016887">
    <property type="term" value="F:ATP hydrolysis activity"/>
    <property type="evidence" value="ECO:0007669"/>
    <property type="project" value="InterPro"/>
</dbReference>
<dbReference type="GO" id="GO:0003677">
    <property type="term" value="F:DNA binding"/>
    <property type="evidence" value="ECO:0007669"/>
    <property type="project" value="UniProtKB-UniRule"/>
</dbReference>
<dbReference type="GO" id="GO:0009381">
    <property type="term" value="F:excinuclease ABC activity"/>
    <property type="evidence" value="ECO:0007669"/>
    <property type="project" value="UniProtKB-UniRule"/>
</dbReference>
<dbReference type="GO" id="GO:0006289">
    <property type="term" value="P:nucleotide-excision repair"/>
    <property type="evidence" value="ECO:0007669"/>
    <property type="project" value="UniProtKB-UniRule"/>
</dbReference>
<dbReference type="GO" id="GO:0009432">
    <property type="term" value="P:SOS response"/>
    <property type="evidence" value="ECO:0007669"/>
    <property type="project" value="UniProtKB-UniRule"/>
</dbReference>
<dbReference type="CDD" id="cd17916">
    <property type="entry name" value="DEXHc_UvrB"/>
    <property type="match status" value="1"/>
</dbReference>
<dbReference type="CDD" id="cd18790">
    <property type="entry name" value="SF2_C_UvrB"/>
    <property type="match status" value="1"/>
</dbReference>
<dbReference type="FunFam" id="3.40.50.300:FF:000477">
    <property type="entry name" value="UvrABC system protein B"/>
    <property type="match status" value="1"/>
</dbReference>
<dbReference type="Gene3D" id="6.10.140.240">
    <property type="match status" value="1"/>
</dbReference>
<dbReference type="Gene3D" id="3.40.50.300">
    <property type="entry name" value="P-loop containing nucleotide triphosphate hydrolases"/>
    <property type="match status" value="3"/>
</dbReference>
<dbReference type="Gene3D" id="4.10.860.10">
    <property type="entry name" value="UVR domain"/>
    <property type="match status" value="1"/>
</dbReference>
<dbReference type="HAMAP" id="MF_00204">
    <property type="entry name" value="UvrB"/>
    <property type="match status" value="1"/>
</dbReference>
<dbReference type="InterPro" id="IPR006935">
    <property type="entry name" value="Helicase/UvrB_N"/>
</dbReference>
<dbReference type="InterPro" id="IPR014001">
    <property type="entry name" value="Helicase_ATP-bd"/>
</dbReference>
<dbReference type="InterPro" id="IPR001650">
    <property type="entry name" value="Helicase_C-like"/>
</dbReference>
<dbReference type="InterPro" id="IPR027417">
    <property type="entry name" value="P-loop_NTPase"/>
</dbReference>
<dbReference type="InterPro" id="IPR001943">
    <property type="entry name" value="UVR_dom"/>
</dbReference>
<dbReference type="InterPro" id="IPR036876">
    <property type="entry name" value="UVR_dom_sf"/>
</dbReference>
<dbReference type="InterPro" id="IPR004807">
    <property type="entry name" value="UvrB"/>
</dbReference>
<dbReference type="InterPro" id="IPR041471">
    <property type="entry name" value="UvrB_inter"/>
</dbReference>
<dbReference type="InterPro" id="IPR024759">
    <property type="entry name" value="UvrB_YAD/RRR_dom"/>
</dbReference>
<dbReference type="NCBIfam" id="NF003673">
    <property type="entry name" value="PRK05298.1"/>
    <property type="match status" value="1"/>
</dbReference>
<dbReference type="NCBIfam" id="TIGR00631">
    <property type="entry name" value="uvrb"/>
    <property type="match status" value="1"/>
</dbReference>
<dbReference type="PANTHER" id="PTHR24029">
    <property type="entry name" value="UVRABC SYSTEM PROTEIN B"/>
    <property type="match status" value="1"/>
</dbReference>
<dbReference type="PANTHER" id="PTHR24029:SF0">
    <property type="entry name" value="UVRABC SYSTEM PROTEIN B"/>
    <property type="match status" value="1"/>
</dbReference>
<dbReference type="Pfam" id="PF00271">
    <property type="entry name" value="Helicase_C"/>
    <property type="match status" value="1"/>
</dbReference>
<dbReference type="Pfam" id="PF04851">
    <property type="entry name" value="ResIII"/>
    <property type="match status" value="1"/>
</dbReference>
<dbReference type="Pfam" id="PF02151">
    <property type="entry name" value="UVR"/>
    <property type="match status" value="1"/>
</dbReference>
<dbReference type="Pfam" id="PF12344">
    <property type="entry name" value="UvrB"/>
    <property type="match status" value="1"/>
</dbReference>
<dbReference type="Pfam" id="PF17757">
    <property type="entry name" value="UvrB_inter"/>
    <property type="match status" value="1"/>
</dbReference>
<dbReference type="SMART" id="SM00487">
    <property type="entry name" value="DEXDc"/>
    <property type="match status" value="1"/>
</dbReference>
<dbReference type="SMART" id="SM00490">
    <property type="entry name" value="HELICc"/>
    <property type="match status" value="1"/>
</dbReference>
<dbReference type="SUPFAM" id="SSF46600">
    <property type="entry name" value="C-terminal UvrC-binding domain of UvrB"/>
    <property type="match status" value="1"/>
</dbReference>
<dbReference type="SUPFAM" id="SSF52540">
    <property type="entry name" value="P-loop containing nucleoside triphosphate hydrolases"/>
    <property type="match status" value="2"/>
</dbReference>
<dbReference type="PROSITE" id="PS51192">
    <property type="entry name" value="HELICASE_ATP_BIND_1"/>
    <property type="match status" value="1"/>
</dbReference>
<dbReference type="PROSITE" id="PS51194">
    <property type="entry name" value="HELICASE_CTER"/>
    <property type="match status" value="1"/>
</dbReference>
<dbReference type="PROSITE" id="PS50151">
    <property type="entry name" value="UVR"/>
    <property type="match status" value="1"/>
</dbReference>
<reference key="1">
    <citation type="journal article" date="2003" name="Nat. Genet.">
        <title>Comparative analysis of the genome sequences of Bordetella pertussis, Bordetella parapertussis and Bordetella bronchiseptica.</title>
        <authorList>
            <person name="Parkhill J."/>
            <person name="Sebaihia M."/>
            <person name="Preston A."/>
            <person name="Murphy L.D."/>
            <person name="Thomson N.R."/>
            <person name="Harris D.E."/>
            <person name="Holden M.T.G."/>
            <person name="Churcher C.M."/>
            <person name="Bentley S.D."/>
            <person name="Mungall K.L."/>
            <person name="Cerdeno-Tarraga A.-M."/>
            <person name="Temple L."/>
            <person name="James K.D."/>
            <person name="Harris B."/>
            <person name="Quail M.A."/>
            <person name="Achtman M."/>
            <person name="Atkin R."/>
            <person name="Baker S."/>
            <person name="Basham D."/>
            <person name="Bason N."/>
            <person name="Cherevach I."/>
            <person name="Chillingworth T."/>
            <person name="Collins M."/>
            <person name="Cronin A."/>
            <person name="Davis P."/>
            <person name="Doggett J."/>
            <person name="Feltwell T."/>
            <person name="Goble A."/>
            <person name="Hamlin N."/>
            <person name="Hauser H."/>
            <person name="Holroyd S."/>
            <person name="Jagels K."/>
            <person name="Leather S."/>
            <person name="Moule S."/>
            <person name="Norberczak H."/>
            <person name="O'Neil S."/>
            <person name="Ormond D."/>
            <person name="Price C."/>
            <person name="Rabbinowitsch E."/>
            <person name="Rutter S."/>
            <person name="Sanders M."/>
            <person name="Saunders D."/>
            <person name="Seeger K."/>
            <person name="Sharp S."/>
            <person name="Simmonds M."/>
            <person name="Skelton J."/>
            <person name="Squares R."/>
            <person name="Squares S."/>
            <person name="Stevens K."/>
            <person name="Unwin L."/>
            <person name="Whitehead S."/>
            <person name="Barrell B.G."/>
            <person name="Maskell D.J."/>
        </authorList>
    </citation>
    <scope>NUCLEOTIDE SEQUENCE [LARGE SCALE GENOMIC DNA]</scope>
    <source>
        <strain>Tohama I / ATCC BAA-589 / NCTC 13251</strain>
    </source>
</reference>